<evidence type="ECO:0000255" key="1">
    <source>
        <dbReference type="HAMAP-Rule" id="MF_00165"/>
    </source>
</evidence>
<accession>Q6G5D6</accession>
<feature type="chain" id="PRO_0000155239" description="Thymidylate kinase">
    <location>
        <begin position="1"/>
        <end position="215"/>
    </location>
</feature>
<feature type="binding site" evidence="1">
    <location>
        <begin position="10"/>
        <end position="17"/>
    </location>
    <ligand>
        <name>ATP</name>
        <dbReference type="ChEBI" id="CHEBI:30616"/>
    </ligand>
</feature>
<sequence>MSGYFITFEGGEGVGKTTQIFLLAQHLYGKGYDVLTTREPGGTAGAEVIRHILLSGQVQQHYGPLIEAILFTAARIDHVSEVIMPSLQKGKVVLCDRFIDSTRVYQGLNDKVSSSTLAVLECLALNKIKPQITFLLDIPARCSMKRANLRREKAETIDYFEKDELKIQEQRRQAFLQLAKQEPHRFRVIDGTDTVEVIAQQIRDICDQVMLDQLP</sequence>
<dbReference type="EC" id="2.7.4.9" evidence="1"/>
<dbReference type="EMBL" id="BX897699">
    <property type="protein sequence ID" value="CAF27644.1"/>
    <property type="molecule type" value="Genomic_DNA"/>
</dbReference>
<dbReference type="RefSeq" id="WP_011180740.1">
    <property type="nucleotide sequence ID" value="NZ_LRIJ02000001.1"/>
</dbReference>
<dbReference type="SMR" id="Q6G5D6"/>
<dbReference type="PaxDb" id="283166-BH08460"/>
<dbReference type="EnsemblBacteria" id="CAF27644">
    <property type="protein sequence ID" value="CAF27644"/>
    <property type="gene ID" value="BH08460"/>
</dbReference>
<dbReference type="GeneID" id="92985490"/>
<dbReference type="KEGG" id="bhe:BH08460"/>
<dbReference type="eggNOG" id="COG0125">
    <property type="taxonomic scope" value="Bacteria"/>
</dbReference>
<dbReference type="OrthoDB" id="9774907at2"/>
<dbReference type="Proteomes" id="UP000000421">
    <property type="component" value="Chromosome"/>
</dbReference>
<dbReference type="GO" id="GO:0005829">
    <property type="term" value="C:cytosol"/>
    <property type="evidence" value="ECO:0007669"/>
    <property type="project" value="TreeGrafter"/>
</dbReference>
<dbReference type="GO" id="GO:0005524">
    <property type="term" value="F:ATP binding"/>
    <property type="evidence" value="ECO:0007669"/>
    <property type="project" value="UniProtKB-UniRule"/>
</dbReference>
<dbReference type="GO" id="GO:0004798">
    <property type="term" value="F:dTMP kinase activity"/>
    <property type="evidence" value="ECO:0007669"/>
    <property type="project" value="UniProtKB-UniRule"/>
</dbReference>
<dbReference type="GO" id="GO:0006233">
    <property type="term" value="P:dTDP biosynthetic process"/>
    <property type="evidence" value="ECO:0007669"/>
    <property type="project" value="InterPro"/>
</dbReference>
<dbReference type="GO" id="GO:0006235">
    <property type="term" value="P:dTTP biosynthetic process"/>
    <property type="evidence" value="ECO:0007669"/>
    <property type="project" value="UniProtKB-UniRule"/>
</dbReference>
<dbReference type="GO" id="GO:0006227">
    <property type="term" value="P:dUDP biosynthetic process"/>
    <property type="evidence" value="ECO:0007669"/>
    <property type="project" value="TreeGrafter"/>
</dbReference>
<dbReference type="CDD" id="cd01672">
    <property type="entry name" value="TMPK"/>
    <property type="match status" value="1"/>
</dbReference>
<dbReference type="FunFam" id="3.40.50.300:FF:000225">
    <property type="entry name" value="Thymidylate kinase"/>
    <property type="match status" value="1"/>
</dbReference>
<dbReference type="Gene3D" id="3.40.50.300">
    <property type="entry name" value="P-loop containing nucleotide triphosphate hydrolases"/>
    <property type="match status" value="1"/>
</dbReference>
<dbReference type="HAMAP" id="MF_00165">
    <property type="entry name" value="Thymidylate_kinase"/>
    <property type="match status" value="1"/>
</dbReference>
<dbReference type="InterPro" id="IPR027417">
    <property type="entry name" value="P-loop_NTPase"/>
</dbReference>
<dbReference type="InterPro" id="IPR039430">
    <property type="entry name" value="Thymidylate_kin-like_dom"/>
</dbReference>
<dbReference type="InterPro" id="IPR018095">
    <property type="entry name" value="Thymidylate_kin_CS"/>
</dbReference>
<dbReference type="InterPro" id="IPR018094">
    <property type="entry name" value="Thymidylate_kinase"/>
</dbReference>
<dbReference type="NCBIfam" id="TIGR00041">
    <property type="entry name" value="DTMP_kinase"/>
    <property type="match status" value="1"/>
</dbReference>
<dbReference type="PANTHER" id="PTHR10344">
    <property type="entry name" value="THYMIDYLATE KINASE"/>
    <property type="match status" value="1"/>
</dbReference>
<dbReference type="PANTHER" id="PTHR10344:SF4">
    <property type="entry name" value="UMP-CMP KINASE 2, MITOCHONDRIAL"/>
    <property type="match status" value="1"/>
</dbReference>
<dbReference type="Pfam" id="PF02223">
    <property type="entry name" value="Thymidylate_kin"/>
    <property type="match status" value="1"/>
</dbReference>
<dbReference type="SUPFAM" id="SSF52540">
    <property type="entry name" value="P-loop containing nucleoside triphosphate hydrolases"/>
    <property type="match status" value="1"/>
</dbReference>
<dbReference type="PROSITE" id="PS01331">
    <property type="entry name" value="THYMIDYLATE_KINASE"/>
    <property type="match status" value="1"/>
</dbReference>
<reference key="1">
    <citation type="journal article" date="2004" name="Proc. Natl. Acad. Sci. U.S.A.">
        <title>The louse-borne human pathogen Bartonella quintana is a genomic derivative of the zoonotic agent Bartonella henselae.</title>
        <authorList>
            <person name="Alsmark U.C.M."/>
            <person name="Frank A.C."/>
            <person name="Karlberg E.O."/>
            <person name="Legault B.-A."/>
            <person name="Ardell D.H."/>
            <person name="Canbaeck B."/>
            <person name="Eriksson A.-S."/>
            <person name="Naeslund A.K."/>
            <person name="Handley S.A."/>
            <person name="Huvet M."/>
            <person name="La Scola B."/>
            <person name="Holmberg M."/>
            <person name="Andersson S.G.E."/>
        </authorList>
    </citation>
    <scope>NUCLEOTIDE SEQUENCE [LARGE SCALE GENOMIC DNA]</scope>
    <source>
        <strain>ATCC 49882 / DSM 28221 / CCUG 30454 / Houston 1</strain>
    </source>
</reference>
<gene>
    <name evidence="1" type="primary">tmk</name>
    <name type="ordered locus">BH08460</name>
</gene>
<comment type="function">
    <text evidence="1">Phosphorylation of dTMP to form dTDP in both de novo and salvage pathways of dTTP synthesis.</text>
</comment>
<comment type="catalytic activity">
    <reaction evidence="1">
        <text>dTMP + ATP = dTDP + ADP</text>
        <dbReference type="Rhea" id="RHEA:13517"/>
        <dbReference type="ChEBI" id="CHEBI:30616"/>
        <dbReference type="ChEBI" id="CHEBI:58369"/>
        <dbReference type="ChEBI" id="CHEBI:63528"/>
        <dbReference type="ChEBI" id="CHEBI:456216"/>
        <dbReference type="EC" id="2.7.4.9"/>
    </reaction>
</comment>
<comment type="similarity">
    <text evidence="1">Belongs to the thymidylate kinase family.</text>
</comment>
<keyword id="KW-0067">ATP-binding</keyword>
<keyword id="KW-0418">Kinase</keyword>
<keyword id="KW-0545">Nucleotide biosynthesis</keyword>
<keyword id="KW-0547">Nucleotide-binding</keyword>
<keyword id="KW-0808">Transferase</keyword>
<name>KTHY_BARHE</name>
<organism>
    <name type="scientific">Bartonella henselae (strain ATCC 49882 / DSM 28221 / CCUG 30454 / Houston 1)</name>
    <name type="common">Rochalimaea henselae</name>
    <dbReference type="NCBI Taxonomy" id="283166"/>
    <lineage>
        <taxon>Bacteria</taxon>
        <taxon>Pseudomonadati</taxon>
        <taxon>Pseudomonadota</taxon>
        <taxon>Alphaproteobacteria</taxon>
        <taxon>Hyphomicrobiales</taxon>
        <taxon>Bartonellaceae</taxon>
        <taxon>Bartonella</taxon>
    </lineage>
</organism>
<proteinExistence type="inferred from homology"/>
<protein>
    <recommendedName>
        <fullName evidence="1">Thymidylate kinase</fullName>
        <ecNumber evidence="1">2.7.4.9</ecNumber>
    </recommendedName>
    <alternativeName>
        <fullName evidence="1">dTMP kinase</fullName>
    </alternativeName>
</protein>